<accession>P59066</accession>
<comment type="function">
    <text evidence="2">Snake venom phospholipase A2 (PLA2) that inhibits collagen-, ADP-, thrombin-, ionophore-, adrenaline-, ristocetin-, and arachidonic acid-induced platelet aggregation. Inhibits serotonin release. PLA2 catalyzes the calcium-dependent hydrolysis of the 2-acyl groups in 3-sn-phosphoglycerides.</text>
</comment>
<comment type="catalytic activity">
    <reaction>
        <text>a 1,2-diacyl-sn-glycero-3-phosphocholine + H2O = a 1-acyl-sn-glycero-3-phosphocholine + a fatty acid + H(+)</text>
        <dbReference type="Rhea" id="RHEA:15801"/>
        <dbReference type="ChEBI" id="CHEBI:15377"/>
        <dbReference type="ChEBI" id="CHEBI:15378"/>
        <dbReference type="ChEBI" id="CHEBI:28868"/>
        <dbReference type="ChEBI" id="CHEBI:57643"/>
        <dbReference type="ChEBI" id="CHEBI:58168"/>
        <dbReference type="EC" id="3.1.1.4"/>
    </reaction>
</comment>
<comment type="cofactor">
    <cofactor evidence="1">
        <name>Ca(2+)</name>
        <dbReference type="ChEBI" id="CHEBI:29108"/>
    </cofactor>
    <text evidence="1">Binds 1 Ca(2+) ion.</text>
</comment>
<comment type="subcellular location">
    <subcellularLocation>
        <location>Secreted</location>
    </subcellularLocation>
</comment>
<comment type="tissue specificity">
    <text>Expressed by the venom gland.</text>
</comment>
<comment type="similarity">
    <text evidence="3">Belongs to the phospholipase A2 family. Group I subfamily.</text>
</comment>
<keyword id="KW-0106">Calcium</keyword>
<keyword id="KW-0903">Direct protein sequencing</keyword>
<keyword id="KW-1199">Hemostasis impairing toxin</keyword>
<keyword id="KW-0378">Hydrolase</keyword>
<keyword id="KW-0442">Lipid degradation</keyword>
<keyword id="KW-0443">Lipid metabolism</keyword>
<keyword id="KW-1201">Platelet aggregation inhibiting toxin</keyword>
<keyword id="KW-0964">Secreted</keyword>
<keyword id="KW-0800">Toxin</keyword>
<evidence type="ECO:0000250" key="1"/>
<evidence type="ECO:0000269" key="2">
    <source>
    </source>
</evidence>
<evidence type="ECO:0000305" key="3"/>
<name>PA2_AUSSU</name>
<organism>
    <name type="scientific">Austrelaps superbus</name>
    <name type="common">Lowland copperhead snake</name>
    <name type="synonym">Hoplocephalus superbus</name>
    <dbReference type="NCBI Taxonomy" id="29156"/>
    <lineage>
        <taxon>Eukaryota</taxon>
        <taxon>Metazoa</taxon>
        <taxon>Chordata</taxon>
        <taxon>Craniata</taxon>
        <taxon>Vertebrata</taxon>
        <taxon>Euteleostomi</taxon>
        <taxon>Lepidosauria</taxon>
        <taxon>Squamata</taxon>
        <taxon>Bifurcata</taxon>
        <taxon>Unidentata</taxon>
        <taxon>Episquamata</taxon>
        <taxon>Toxicofera</taxon>
        <taxon>Serpentes</taxon>
        <taxon>Colubroidea</taxon>
        <taxon>Elapidae</taxon>
        <taxon>Hydrophiinae</taxon>
        <taxon>Austrelaps</taxon>
    </lineage>
</organism>
<protein>
    <recommendedName>
        <fullName>Phospholipase A2</fullName>
        <shortName>svPLA2</shortName>
        <ecNumber>3.1.1.4</ecNumber>
    </recommendedName>
    <alternativeName>
        <fullName>Phosphatidylcholine 2-acylhydrolase</fullName>
    </alternativeName>
</protein>
<sequence length="17" mass="1846">NLIQFANMIGCANHGSR</sequence>
<proteinExistence type="evidence at protein level"/>
<feature type="chain" id="PRO_0000161609" description="Phospholipase A2">
    <location>
        <begin position="1"/>
        <end position="17" status="greater than"/>
    </location>
</feature>
<feature type="non-terminal residue">
    <location>
        <position position="17"/>
    </location>
</feature>
<dbReference type="EC" id="3.1.1.4"/>
<dbReference type="GO" id="GO:0005576">
    <property type="term" value="C:extracellular region"/>
    <property type="evidence" value="ECO:0007669"/>
    <property type="project" value="UniProtKB-SubCell"/>
</dbReference>
<dbReference type="GO" id="GO:0004623">
    <property type="term" value="F:phospholipase A2 activity"/>
    <property type="evidence" value="ECO:0007669"/>
    <property type="project" value="UniProtKB-EC"/>
</dbReference>
<dbReference type="GO" id="GO:0090729">
    <property type="term" value="F:toxin activity"/>
    <property type="evidence" value="ECO:0007669"/>
    <property type="project" value="UniProtKB-KW"/>
</dbReference>
<dbReference type="GO" id="GO:0016042">
    <property type="term" value="P:lipid catabolic process"/>
    <property type="evidence" value="ECO:0007669"/>
    <property type="project" value="UniProtKB-KW"/>
</dbReference>
<reference key="1">
    <citation type="journal article" date="1993" name="Thromb. Res.">
        <title>Purification and characterisation of a snake venom phospholipase A2: a potent inhibitor of platelet aggregation.</title>
        <authorList>
            <person name="Yuan Y."/>
            <person name="Jackson S.P."/>
            <person name="Mitchell C.A."/>
            <person name="Salem H.H."/>
        </authorList>
    </citation>
    <scope>PROTEIN SEQUENCE</scope>
    <scope>FUNCTION</scope>
    <source>
        <tissue>Venom</tissue>
    </source>
</reference>